<proteinExistence type="evidence at protein level"/>
<keyword id="KW-0997">Cell inner membrane</keyword>
<keyword id="KW-1003">Cell membrane</keyword>
<keyword id="KW-0472">Membrane</keyword>
<keyword id="KW-0732">Signal</keyword>
<keyword id="KW-0812">Transmembrane</keyword>
<keyword id="KW-1133">Transmembrane helix</keyword>
<accession>A0A0H2ZC68</accession>
<feature type="signal peptide" evidence="2">
    <location>
        <begin position="1"/>
        <end position="24"/>
    </location>
</feature>
<feature type="chain" id="PRO_0000450454" description="Motility hub protein FimV" evidence="2">
    <location>
        <begin position="25"/>
        <end position="924"/>
    </location>
</feature>
<feature type="transmembrane region" description="Helical" evidence="2">
    <location>
        <begin position="464"/>
        <end position="484"/>
    </location>
</feature>
<feature type="domain" description="LysM" evidence="3">
    <location>
        <begin position="174"/>
        <end position="229"/>
    </location>
</feature>
<feature type="region of interest" description="Disordered" evidence="4">
    <location>
        <begin position="140"/>
        <end position="176"/>
    </location>
</feature>
<feature type="region of interest" description="Disordered" evidence="4">
    <location>
        <begin position="237"/>
        <end position="312"/>
    </location>
</feature>
<feature type="region of interest" description="Disordered" evidence="4">
    <location>
        <begin position="372"/>
        <end position="445"/>
    </location>
</feature>
<feature type="region of interest" description="Disordered" evidence="4">
    <location>
        <begin position="799"/>
        <end position="858"/>
    </location>
</feature>
<feature type="compositionally biased region" description="Low complexity" evidence="4">
    <location>
        <begin position="140"/>
        <end position="150"/>
    </location>
</feature>
<feature type="compositionally biased region" description="Polar residues" evidence="4">
    <location>
        <begin position="245"/>
        <end position="256"/>
    </location>
</feature>
<feature type="compositionally biased region" description="Basic and acidic residues" evidence="4">
    <location>
        <begin position="299"/>
        <end position="312"/>
    </location>
</feature>
<feature type="compositionally biased region" description="Low complexity" evidence="4">
    <location>
        <begin position="390"/>
        <end position="417"/>
    </location>
</feature>
<feature type="compositionally biased region" description="Pro residues" evidence="4">
    <location>
        <begin position="418"/>
        <end position="443"/>
    </location>
</feature>
<evidence type="ECO:0000250" key="1">
    <source>
        <dbReference type="UniProtKB" id="Q9HZA6"/>
    </source>
</evidence>
<evidence type="ECO:0000255" key="2"/>
<evidence type="ECO:0000255" key="3">
    <source>
        <dbReference type="PROSITE-ProRule" id="PRU01118"/>
    </source>
</evidence>
<evidence type="ECO:0000256" key="4">
    <source>
        <dbReference type="SAM" id="MobiDB-lite"/>
    </source>
</evidence>
<evidence type="ECO:0000269" key="5">
    <source>
    </source>
</evidence>
<gene>
    <name type="primary">fimV</name>
    <name type="ordered locus">PA14_23830</name>
</gene>
<sequence length="924" mass="97316">MVRLRTLVRAIAAASVLTSGMAHGLGLGEITLKSALNQPLDAEIELLEVRDLGSGEVIPSLASPEEFSKAGVDRLYYLTDLKFTPVVKPNGKSVIRVTSSKPVQEPYLNFLVQVLWPNGRLLREYTVLLDPPLYSPQAAASAPQAPVSAPRATGAPRTPQAPAPVRTTAPAGSDTYRTVSNDTLWEIAQRNRTDRVSVPQAMLAFQELNPGAFVDGNINRLKSGQVLRIPTEQQMLERSPREALSQVQAQNQSWRGSRNPAAGTAGARQLDATQRNAAGSAPSKVDATDNLRLVSGEGKASKGADKGGKGDSKAIADTLAVTKESLDSTRRENEELQSRMQDLQSQLDKLQKLIQLKDAQLAKLQGQLGAEGQGAAQPNAALPDASQPNAAAQAPAQPGTPAAAAPTPAPAGEAPAAPAQPPVAPPPAPVAEKPPAPAVPAPAPVQAAEQPAPSFLDELLANPLWLAVIGGSALLALLVLLMILSRRNAQKEKEEAQAFAADAGEEQEDALDLGKDGFDDLTLDEPEPQVAAAAPQVEKTTAQTSDALGEADIYIAYGRFNQAAELLQNAIYDEPQRTDLRLKLMEVYAEMGDREGFARQENELREIGGAQPQVEQLKSRYPAMVAVAAVAGLAGAKLAQDELDSFSLDDLSLDDSGHAAKPDAAGQDLDDAFDLSLDDLGGGDLGSDDVQADLKSDSGALDDLTLDSDLDLAASTAADKPVDDLDFGLDFAELAETPSQPKHDDLGDFSLDLDAPEDKLSDDDFLLSLNDEVPAAAPANNEFTLDTEAAEEPALSLPDDFDLSLADEPTEPAAPEKGEDSFAAQLDEVSAQLDELASNLDEPKSAAPSFSAEDAAVASALDGDADDDFDFLSGADEAATKLDLARAYIDMGDSEGARDILDEVLAEGNDSQQAEARELLERLA</sequence>
<protein>
    <recommendedName>
        <fullName>Motility hub protein FimV</fullName>
    </recommendedName>
</protein>
<comment type="function">
    <text evidence="1 5">Inner membrane hub protein that plays both cAMP-dependent and cAMP-independent roles in twitching motility. Regulates intracellular cyclic AMP (cAMP) levels through the activation of adenylate cyclase CyaB. Plays an essential role in a number of virulence mechanisms including type IV pilus (T4P)-mediated assembly and twitching motility as well as cAMP-dependent virulence gene expression. Also mediates type II secretion (T2S) of lipases and proteases. In addition, mediates the cAMP-independent localization of multiple T4P structural and regulatory components to the cell poles (By similarity). This role in directing proteins to the cell pole is not restricted to type IV component and involves other proteins such as the diguanylate cyclase DgcP (PubMed:32080219).</text>
</comment>
<comment type="subunit">
    <text evidence="1 5">Interacts with FimL (By similarity). Interacts with DgcP (PubMed:32080219).</text>
</comment>
<comment type="subcellular location">
    <subcellularLocation>
        <location evidence="5">Cell inner membrane</location>
        <topology evidence="2">Single-pass membrane protein</topology>
    </subcellularLocation>
</comment>
<comment type="domain">
    <text evidence="1">The N-terminal domain binds peptidoglycans through LysM motif. In addition, this motif is required for PilQ stability and multimerization. The cytoplasmic domain contains three discontinuous tetratricopeptide repeat (TPR) motifs involved in protein-protein interactions.</text>
</comment>
<dbReference type="EMBL" id="CP000438">
    <property type="protein sequence ID" value="ABJ12347.1"/>
    <property type="molecule type" value="Genomic_DNA"/>
</dbReference>
<dbReference type="RefSeq" id="WP_003138501.1">
    <property type="nucleotide sequence ID" value="NZ_CP034244.1"/>
</dbReference>
<dbReference type="SMR" id="A0A0H2ZC68"/>
<dbReference type="KEGG" id="pau:PA14_23830"/>
<dbReference type="HOGENOM" id="CLU_007099_1_0_6"/>
<dbReference type="BioCyc" id="PAER208963:G1G74-1987-MONOMER"/>
<dbReference type="Proteomes" id="UP000000653">
    <property type="component" value="Chromosome"/>
</dbReference>
<dbReference type="GO" id="GO:0005886">
    <property type="term" value="C:plasma membrane"/>
    <property type="evidence" value="ECO:0007669"/>
    <property type="project" value="UniProtKB-SubCell"/>
</dbReference>
<dbReference type="GO" id="GO:0017056">
    <property type="term" value="F:structural constituent of nuclear pore"/>
    <property type="evidence" value="ECO:0007669"/>
    <property type="project" value="TreeGrafter"/>
</dbReference>
<dbReference type="GO" id="GO:0006406">
    <property type="term" value="P:mRNA export from nucleus"/>
    <property type="evidence" value="ECO:0007669"/>
    <property type="project" value="TreeGrafter"/>
</dbReference>
<dbReference type="CDD" id="cd00118">
    <property type="entry name" value="LysM"/>
    <property type="match status" value="1"/>
</dbReference>
<dbReference type="Gene3D" id="1.20.58.2200">
    <property type="match status" value="1"/>
</dbReference>
<dbReference type="Gene3D" id="3.10.350.10">
    <property type="entry name" value="LysM domain"/>
    <property type="match status" value="1"/>
</dbReference>
<dbReference type="Gene3D" id="1.25.40.10">
    <property type="entry name" value="Tetratricopeptide repeat domain"/>
    <property type="match status" value="1"/>
</dbReference>
<dbReference type="InterPro" id="IPR038440">
    <property type="entry name" value="FimV_C_sf"/>
</dbReference>
<dbReference type="InterPro" id="IPR018392">
    <property type="entry name" value="LysM_dom"/>
</dbReference>
<dbReference type="InterPro" id="IPR036779">
    <property type="entry name" value="LysM_dom_sf"/>
</dbReference>
<dbReference type="InterPro" id="IPR020011">
    <property type="entry name" value="Motility_prot_FimV_C"/>
</dbReference>
<dbReference type="InterPro" id="IPR020012">
    <property type="entry name" value="Motility_prot_FimV_N"/>
</dbReference>
<dbReference type="InterPro" id="IPR011990">
    <property type="entry name" value="TPR-like_helical_dom_sf"/>
</dbReference>
<dbReference type="NCBIfam" id="TIGR03505">
    <property type="entry name" value="FimV_core"/>
    <property type="match status" value="1"/>
</dbReference>
<dbReference type="NCBIfam" id="TIGR03504">
    <property type="entry name" value="FimV_Cterm"/>
    <property type="match status" value="1"/>
</dbReference>
<dbReference type="PANTHER" id="PTHR18898:SF2">
    <property type="entry name" value="NUCLEOPROTEIN TPR"/>
    <property type="match status" value="1"/>
</dbReference>
<dbReference type="PANTHER" id="PTHR18898">
    <property type="entry name" value="NUCLEOPROTEIN TPR-RELATED"/>
    <property type="match status" value="1"/>
</dbReference>
<dbReference type="SMART" id="SM00257">
    <property type="entry name" value="LysM"/>
    <property type="match status" value="1"/>
</dbReference>
<dbReference type="SUPFAM" id="SSF48452">
    <property type="entry name" value="TPR-like"/>
    <property type="match status" value="1"/>
</dbReference>
<dbReference type="PROSITE" id="PS51782">
    <property type="entry name" value="LYSM"/>
    <property type="match status" value="1"/>
</dbReference>
<name>FIMV_PSEAB</name>
<organism>
    <name type="scientific">Pseudomonas aeruginosa (strain UCBPP-PA14)</name>
    <dbReference type="NCBI Taxonomy" id="208963"/>
    <lineage>
        <taxon>Bacteria</taxon>
        <taxon>Pseudomonadati</taxon>
        <taxon>Pseudomonadota</taxon>
        <taxon>Gammaproteobacteria</taxon>
        <taxon>Pseudomonadales</taxon>
        <taxon>Pseudomonadaceae</taxon>
        <taxon>Pseudomonas</taxon>
    </lineage>
</organism>
<reference key="1">
    <citation type="journal article" date="2006" name="Genome Biol.">
        <title>Genomic analysis reveals that Pseudomonas aeruginosa virulence is combinatorial.</title>
        <authorList>
            <person name="Lee D.G."/>
            <person name="Urbach J.M."/>
            <person name="Wu G."/>
            <person name="Liberati N.T."/>
            <person name="Feinbaum R.L."/>
            <person name="Miyata S."/>
            <person name="Diggins L.T."/>
            <person name="He J."/>
            <person name="Saucier M."/>
            <person name="Deziel E."/>
            <person name="Friedman L."/>
            <person name="Li L."/>
            <person name="Grills G."/>
            <person name="Montgomery K."/>
            <person name="Kucherlapati R."/>
            <person name="Rahme L.G."/>
            <person name="Ausubel F.M."/>
        </authorList>
    </citation>
    <scope>NUCLEOTIDE SEQUENCE [LARGE SCALE GENOMIC DNA]</scope>
    <source>
        <strain>UCBPP-PA14</strain>
    </source>
</reference>
<reference key="2">
    <citation type="journal article" date="2020" name="Sci. Rep.">
        <title>c-di-GMP-related phenotypes are modulated by the interaction between a diguanylate cyclase and a polar hub protein.</title>
        <authorList>
            <person name="Nicastro G.G."/>
            <person name="Kaihami G.H."/>
            <person name="Pulschen A.A."/>
            <person name="Hernandez-Montelongo J."/>
            <person name="Boechat A.L."/>
            <person name="de Oliveira Pereira T."/>
            <person name="Rosa C.G.T."/>
            <person name="Stefanello E."/>
            <person name="Colepicolo P."/>
            <person name="Bordi C."/>
            <person name="Baldini R.L."/>
        </authorList>
    </citation>
    <scope>FUNCTION</scope>
    <scope>INTERACTION WITH DCPG</scope>
    <scope>SUBCELLULAR LOCATION</scope>
</reference>